<organism>
    <name type="scientific">Macaca fuscata fuscata</name>
    <name type="common">Japanese macaque</name>
    <dbReference type="NCBI Taxonomy" id="9543"/>
    <lineage>
        <taxon>Eukaryota</taxon>
        <taxon>Metazoa</taxon>
        <taxon>Chordata</taxon>
        <taxon>Craniata</taxon>
        <taxon>Vertebrata</taxon>
        <taxon>Euteleostomi</taxon>
        <taxon>Mammalia</taxon>
        <taxon>Eutheria</taxon>
        <taxon>Euarchontoglires</taxon>
        <taxon>Primates</taxon>
        <taxon>Haplorrhini</taxon>
        <taxon>Catarrhini</taxon>
        <taxon>Cercopithecidae</taxon>
        <taxon>Cercopithecinae</taxon>
        <taxon>Macaca</taxon>
    </lineage>
</organism>
<accession>Q865R2</accession>
<evidence type="ECO:0000250" key="1"/>
<evidence type="ECO:0000250" key="2">
    <source>
        <dbReference type="UniProtKB" id="O70325"/>
    </source>
</evidence>
<evidence type="ECO:0000250" key="3">
    <source>
        <dbReference type="UniProtKB" id="P04041"/>
    </source>
</evidence>
<evidence type="ECO:0000250" key="4">
    <source>
        <dbReference type="UniProtKB" id="P07203"/>
    </source>
</evidence>
<evidence type="ECO:0000250" key="5">
    <source>
        <dbReference type="UniProtKB" id="P11352"/>
    </source>
</evidence>
<evidence type="ECO:0000305" key="6"/>
<name>GPX1_MACFU</name>
<protein>
    <recommendedName>
        <fullName evidence="6">Glutathione peroxidase 1</fullName>
        <shortName>GPx-1</shortName>
        <shortName>GSHPx-1</shortName>
        <ecNumber evidence="4">1.11.1.9</ecNumber>
    </recommendedName>
    <alternativeName>
        <fullName>Cellular glutathione peroxidase</fullName>
    </alternativeName>
    <alternativeName>
        <fullName>Phospholipid-hydroperoxide glutathione peroxidase GPX1</fullName>
        <ecNumber evidence="4">1.11.1.12</ecNumber>
    </alternativeName>
</protein>
<proteinExistence type="evidence at transcript level"/>
<feature type="chain" id="PRO_0000066612" description="Glutathione peroxidase 1">
    <location>
        <begin position="1"/>
        <end position="201"/>
    </location>
</feature>
<feature type="active site" evidence="2">
    <location>
        <position position="47"/>
    </location>
</feature>
<feature type="site" description="Subject to oxidation and hydroselenide loss to dehydroalanine" evidence="1">
    <location>
        <position position="47"/>
    </location>
</feature>
<feature type="non-standard amino acid" description="Selenocysteine" evidence="5">
    <location>
        <position position="47"/>
    </location>
</feature>
<feature type="modified residue" description="Phosphoserine" evidence="3">
    <location>
        <position position="32"/>
    </location>
</feature>
<feature type="modified residue" description="N6-acetyllysine; alternate" evidence="5">
    <location>
        <position position="86"/>
    </location>
</feature>
<feature type="modified residue" description="N6-succinyllysine; alternate" evidence="5">
    <location>
        <position position="86"/>
    </location>
</feature>
<feature type="modified residue" description="N6-acetyllysine; alternate" evidence="5">
    <location>
        <position position="112"/>
    </location>
</feature>
<feature type="modified residue" description="N6-succinyllysine; alternate" evidence="5">
    <location>
        <position position="112"/>
    </location>
</feature>
<feature type="modified residue" description="N6-acetyllysine; alternate" evidence="5">
    <location>
        <position position="146"/>
    </location>
</feature>
<feature type="modified residue" description="N6-succinyllysine; alternate" evidence="5">
    <location>
        <position position="146"/>
    </location>
</feature>
<feature type="modified residue" description="Phosphoserine" evidence="3">
    <location>
        <position position="195"/>
    </location>
</feature>
<feature type="modified residue" description="Phosphoserine" evidence="4">
    <location>
        <position position="199"/>
    </location>
</feature>
<dbReference type="EC" id="1.11.1.9" evidence="4"/>
<dbReference type="EC" id="1.11.1.12" evidence="4"/>
<dbReference type="EMBL" id="AB105162">
    <property type="protein sequence ID" value="BAC67247.1"/>
    <property type="molecule type" value="mRNA"/>
</dbReference>
<dbReference type="PeroxiBase" id="3703">
    <property type="entry name" value="MfGPx01"/>
</dbReference>
<dbReference type="GO" id="GO:0005829">
    <property type="term" value="C:cytosol"/>
    <property type="evidence" value="ECO:0000250"/>
    <property type="project" value="UniProtKB"/>
</dbReference>
<dbReference type="GO" id="GO:0005739">
    <property type="term" value="C:mitochondrion"/>
    <property type="evidence" value="ECO:0007669"/>
    <property type="project" value="UniProtKB-SubCell"/>
</dbReference>
<dbReference type="GO" id="GO:0004602">
    <property type="term" value="F:glutathione peroxidase activity"/>
    <property type="evidence" value="ECO:0000250"/>
    <property type="project" value="UniProtKB"/>
</dbReference>
<dbReference type="GO" id="GO:0047066">
    <property type="term" value="F:phospholipid-hydroperoxide glutathione peroxidase activity"/>
    <property type="evidence" value="ECO:0000250"/>
    <property type="project" value="UniProtKB"/>
</dbReference>
<dbReference type="GO" id="GO:0019369">
    <property type="term" value="P:arachidonate metabolic process"/>
    <property type="evidence" value="ECO:0000250"/>
    <property type="project" value="UniProtKB"/>
</dbReference>
<dbReference type="GO" id="GO:0006749">
    <property type="term" value="P:glutathione metabolic process"/>
    <property type="evidence" value="ECO:0007669"/>
    <property type="project" value="TreeGrafter"/>
</dbReference>
<dbReference type="GO" id="GO:0042744">
    <property type="term" value="P:hydrogen peroxide catabolic process"/>
    <property type="evidence" value="ECO:0007669"/>
    <property type="project" value="TreeGrafter"/>
</dbReference>
<dbReference type="GO" id="GO:0019372">
    <property type="term" value="P:lipoxygenase pathway"/>
    <property type="evidence" value="ECO:0000250"/>
    <property type="project" value="UniProtKB"/>
</dbReference>
<dbReference type="GO" id="GO:0042542">
    <property type="term" value="P:response to hydrogen peroxide"/>
    <property type="evidence" value="ECO:0007669"/>
    <property type="project" value="TreeGrafter"/>
</dbReference>
<dbReference type="GO" id="GO:0010269">
    <property type="term" value="P:response to selenium ion"/>
    <property type="evidence" value="ECO:0007669"/>
    <property type="project" value="TreeGrafter"/>
</dbReference>
<dbReference type="CDD" id="cd00340">
    <property type="entry name" value="GSH_Peroxidase"/>
    <property type="match status" value="1"/>
</dbReference>
<dbReference type="FunFam" id="3.40.30.10:FF:000153">
    <property type="entry name" value="Glutathione peroxidase"/>
    <property type="match status" value="1"/>
</dbReference>
<dbReference type="Gene3D" id="3.40.30.10">
    <property type="entry name" value="Glutaredoxin"/>
    <property type="match status" value="1"/>
</dbReference>
<dbReference type="InterPro" id="IPR000889">
    <property type="entry name" value="Glutathione_peroxidase"/>
</dbReference>
<dbReference type="InterPro" id="IPR029759">
    <property type="entry name" value="GPX_AS"/>
</dbReference>
<dbReference type="InterPro" id="IPR029760">
    <property type="entry name" value="GPX_CS"/>
</dbReference>
<dbReference type="InterPro" id="IPR036249">
    <property type="entry name" value="Thioredoxin-like_sf"/>
</dbReference>
<dbReference type="PANTHER" id="PTHR11592">
    <property type="entry name" value="GLUTATHIONE PEROXIDASE"/>
    <property type="match status" value="1"/>
</dbReference>
<dbReference type="PANTHER" id="PTHR11592:SF41">
    <property type="entry name" value="GLUTATHIONE PEROXIDASE 1"/>
    <property type="match status" value="1"/>
</dbReference>
<dbReference type="Pfam" id="PF00255">
    <property type="entry name" value="GSHPx"/>
    <property type="match status" value="1"/>
</dbReference>
<dbReference type="PIRSF" id="PIRSF000303">
    <property type="entry name" value="Glutathion_perox"/>
    <property type="match status" value="1"/>
</dbReference>
<dbReference type="PRINTS" id="PR01011">
    <property type="entry name" value="GLUTPROXDASE"/>
</dbReference>
<dbReference type="SUPFAM" id="SSF52833">
    <property type="entry name" value="Thioredoxin-like"/>
    <property type="match status" value="1"/>
</dbReference>
<dbReference type="PROSITE" id="PS00460">
    <property type="entry name" value="GLUTATHIONE_PEROXID_1"/>
    <property type="match status" value="1"/>
</dbReference>
<dbReference type="PROSITE" id="PS00763">
    <property type="entry name" value="GLUTATHIONE_PEROXID_2"/>
    <property type="match status" value="1"/>
</dbReference>
<dbReference type="PROSITE" id="PS51355">
    <property type="entry name" value="GLUTATHIONE_PEROXID_3"/>
    <property type="match status" value="1"/>
</dbReference>
<comment type="function">
    <text evidence="5">Catalyzes the reduction of hydroperoxides in a glutathione-dependent manner thus regulating cellular redox homeostasis. Can reduce small soluble hydroperoxides such as H2O2, cumene hydroperoxide and tert-butyl hydroperoxide, as well as several fatty acid-derived hydroperoxides. In platelets catalyzes the reduction of 12-hydroperoxyeicosatetraenoic acid, the primary product of the arachidonate 12-lipoxygenase pathway.</text>
</comment>
<comment type="catalytic activity">
    <reaction evidence="5">
        <text>2 glutathione + H2O2 = glutathione disulfide + 2 H2O</text>
        <dbReference type="Rhea" id="RHEA:16833"/>
        <dbReference type="ChEBI" id="CHEBI:15377"/>
        <dbReference type="ChEBI" id="CHEBI:16240"/>
        <dbReference type="ChEBI" id="CHEBI:57925"/>
        <dbReference type="ChEBI" id="CHEBI:58297"/>
        <dbReference type="EC" id="1.11.1.9"/>
    </reaction>
    <physiologicalReaction direction="left-to-right" evidence="5">
        <dbReference type="Rhea" id="RHEA:16834"/>
    </physiologicalReaction>
</comment>
<comment type="catalytic activity">
    <reaction evidence="4">
        <text>a hydroperoxy polyunsaturated fatty acid + 2 glutathione = a hydroxy polyunsaturated fatty acid + glutathione disulfide + H2O</text>
        <dbReference type="Rhea" id="RHEA:19057"/>
        <dbReference type="ChEBI" id="CHEBI:15377"/>
        <dbReference type="ChEBI" id="CHEBI:57925"/>
        <dbReference type="ChEBI" id="CHEBI:58297"/>
        <dbReference type="ChEBI" id="CHEBI:131871"/>
        <dbReference type="ChEBI" id="CHEBI:134019"/>
        <dbReference type="EC" id="1.11.1.12"/>
    </reaction>
    <physiologicalReaction direction="left-to-right" evidence="4">
        <dbReference type="Rhea" id="RHEA:19058"/>
    </physiologicalReaction>
</comment>
<comment type="catalytic activity">
    <reaction evidence="4">
        <text>tert-butyl hydroperoxide + 2 glutathione = tert-butanol + glutathione disulfide + H2O</text>
        <dbReference type="Rhea" id="RHEA:69412"/>
        <dbReference type="ChEBI" id="CHEBI:15377"/>
        <dbReference type="ChEBI" id="CHEBI:45895"/>
        <dbReference type="ChEBI" id="CHEBI:57925"/>
        <dbReference type="ChEBI" id="CHEBI:58297"/>
        <dbReference type="ChEBI" id="CHEBI:64090"/>
    </reaction>
    <physiologicalReaction direction="left-to-right" evidence="4">
        <dbReference type="Rhea" id="RHEA:69413"/>
    </physiologicalReaction>
</comment>
<comment type="catalytic activity">
    <reaction evidence="4">
        <text>cumene hydroperoxide + 2 glutathione = 2-phenylpropan-2-ol + glutathione disulfide + H2O</text>
        <dbReference type="Rhea" id="RHEA:69651"/>
        <dbReference type="ChEBI" id="CHEBI:15377"/>
        <dbReference type="ChEBI" id="CHEBI:57925"/>
        <dbReference type="ChEBI" id="CHEBI:58297"/>
        <dbReference type="ChEBI" id="CHEBI:78673"/>
        <dbReference type="ChEBI" id="CHEBI:131607"/>
    </reaction>
    <physiologicalReaction direction="left-to-right" evidence="4">
        <dbReference type="Rhea" id="RHEA:69652"/>
    </physiologicalReaction>
</comment>
<comment type="catalytic activity">
    <reaction evidence="4">
        <text>(13S)-hydroperoxy-(9Z,11E)-octadecadienoate + 2 glutathione = (13S)-hydroxy-(9Z,11E)-octadecadienoate + glutathione disulfide + H2O</text>
        <dbReference type="Rhea" id="RHEA:48888"/>
        <dbReference type="ChEBI" id="CHEBI:15377"/>
        <dbReference type="ChEBI" id="CHEBI:57466"/>
        <dbReference type="ChEBI" id="CHEBI:57925"/>
        <dbReference type="ChEBI" id="CHEBI:58297"/>
        <dbReference type="ChEBI" id="CHEBI:90850"/>
    </reaction>
    <physiologicalReaction direction="left-to-right" evidence="4">
        <dbReference type="Rhea" id="RHEA:48889"/>
    </physiologicalReaction>
</comment>
<comment type="catalytic activity">
    <reaction evidence="4">
        <text>(9S)-hydroperoxy-(10E,12Z)-octadecadienoate + 2 glutathione = (9S)-hydroxy-(10E,12Z)-octadecadienoate + glutathione disulfide + H2O</text>
        <dbReference type="Rhea" id="RHEA:76687"/>
        <dbReference type="ChEBI" id="CHEBI:15377"/>
        <dbReference type="ChEBI" id="CHEBI:57925"/>
        <dbReference type="ChEBI" id="CHEBI:58297"/>
        <dbReference type="ChEBI" id="CHEBI:60955"/>
        <dbReference type="ChEBI" id="CHEBI:77852"/>
    </reaction>
    <physiologicalReaction direction="left-to-right" evidence="4">
        <dbReference type="Rhea" id="RHEA:76688"/>
    </physiologicalReaction>
</comment>
<comment type="catalytic activity">
    <reaction evidence="4">
        <text>(5S)-hydroperoxy-(6E,8Z,11Z,14Z)-eicosatetraenoate + 2 glutathione = (5S)-hydroxy-(6E,8Z,11Z,14Z)-eicosatetraenoate + glutathione disulfide + H2O</text>
        <dbReference type="Rhea" id="RHEA:48620"/>
        <dbReference type="ChEBI" id="CHEBI:15377"/>
        <dbReference type="ChEBI" id="CHEBI:57450"/>
        <dbReference type="ChEBI" id="CHEBI:57925"/>
        <dbReference type="ChEBI" id="CHEBI:58297"/>
        <dbReference type="ChEBI" id="CHEBI:90632"/>
    </reaction>
    <physiologicalReaction direction="left-to-right" evidence="4">
        <dbReference type="Rhea" id="RHEA:48621"/>
    </physiologicalReaction>
</comment>
<comment type="catalytic activity">
    <reaction evidence="5">
        <text>(12S)-hydroperoxy-(5Z,8Z,10E,14Z)-eicosatetraenoate + 2 glutathione = (12S)-hydroxy-(5Z,8Z,10E,14Z)-eicosatetraenoate + glutathione disulfide + H2O</text>
        <dbReference type="Rhea" id="RHEA:50708"/>
        <dbReference type="ChEBI" id="CHEBI:15377"/>
        <dbReference type="ChEBI" id="CHEBI:57444"/>
        <dbReference type="ChEBI" id="CHEBI:57925"/>
        <dbReference type="ChEBI" id="CHEBI:58297"/>
        <dbReference type="ChEBI" id="CHEBI:90680"/>
    </reaction>
    <physiologicalReaction direction="left-to-right" evidence="5">
        <dbReference type="Rhea" id="RHEA:50709"/>
    </physiologicalReaction>
</comment>
<comment type="catalytic activity">
    <reaction evidence="4">
        <text>(12R)-hydroperoxy-(5Z,8Z,10E,14Z)-eicosatetraenoate + 2 glutathione = (12R)-hydroxy-(5Z,8Z,10E,14Z)-eicosatetraenoate + glutathione disulfide + H2O</text>
        <dbReference type="Rhea" id="RHEA:76691"/>
        <dbReference type="ChEBI" id="CHEBI:15377"/>
        <dbReference type="ChEBI" id="CHEBI:57925"/>
        <dbReference type="ChEBI" id="CHEBI:58297"/>
        <dbReference type="ChEBI" id="CHEBI:75230"/>
        <dbReference type="ChEBI" id="CHEBI:83343"/>
    </reaction>
    <physiologicalReaction direction="left-to-right" evidence="4">
        <dbReference type="Rhea" id="RHEA:76692"/>
    </physiologicalReaction>
</comment>
<comment type="catalytic activity">
    <reaction evidence="4">
        <text>(15S)-hydroperoxy-(5Z,8Z,11Z,13E)-eicosatetraenoate + 2 glutathione = (15S)-hydroxy-(5Z,8Z,11Z,13E)-eicosatetraenoate + glutathione disulfide + H2O</text>
        <dbReference type="Rhea" id="RHEA:76695"/>
        <dbReference type="ChEBI" id="CHEBI:15377"/>
        <dbReference type="ChEBI" id="CHEBI:57409"/>
        <dbReference type="ChEBI" id="CHEBI:57446"/>
        <dbReference type="ChEBI" id="CHEBI:57925"/>
        <dbReference type="ChEBI" id="CHEBI:58297"/>
    </reaction>
    <physiologicalReaction direction="left-to-right" evidence="4">
        <dbReference type="Rhea" id="RHEA:76696"/>
    </physiologicalReaction>
</comment>
<comment type="catalytic activity">
    <reaction evidence="4">
        <text>(5S)-hydroperoxy-(6E,8Z,11Z,14Z,17Z)-eicosapentaenoate + 2 glutathione = (5S)-hydroxy-(6E,8Z,11Z,14Z,17Z)-eicosapentaenoate + glutathione disulfide + H2O</text>
        <dbReference type="Rhea" id="RHEA:76699"/>
        <dbReference type="ChEBI" id="CHEBI:15377"/>
        <dbReference type="ChEBI" id="CHEBI:57925"/>
        <dbReference type="ChEBI" id="CHEBI:58297"/>
        <dbReference type="ChEBI" id="CHEBI:195399"/>
        <dbReference type="ChEBI" id="CHEBI:195400"/>
    </reaction>
    <physiologicalReaction direction="left-to-right" evidence="4">
        <dbReference type="Rhea" id="RHEA:76700"/>
    </physiologicalReaction>
</comment>
<comment type="catalytic activity">
    <reaction evidence="4">
        <text>(12S)-hydroperoxy-(5Z,8Z,10E,14Z,17Z)-eicosapentaenoate + 2 glutathione = (12S)-hydroxy-(5Z,8Z,10E,14Z,17Z)-eicosapentaenoate + glutathione disulfide + H2O</text>
        <dbReference type="Rhea" id="RHEA:76703"/>
        <dbReference type="ChEBI" id="CHEBI:15377"/>
        <dbReference type="ChEBI" id="CHEBI:57925"/>
        <dbReference type="ChEBI" id="CHEBI:58297"/>
        <dbReference type="ChEBI" id="CHEBI:90772"/>
        <dbReference type="ChEBI" id="CHEBI:195401"/>
    </reaction>
    <physiologicalReaction direction="left-to-right" evidence="4">
        <dbReference type="Rhea" id="RHEA:76704"/>
    </physiologicalReaction>
</comment>
<comment type="catalytic activity">
    <reaction evidence="4">
        <text>(15S)-hydroperoxy-(5Z,8Z,11Z,13E,17Z)-eicosapentaenoate + 2 glutathione = (15S)-hydroxy-(5Z,8Z,11Z,13E,17Z)-eicosapentaenoate + glutathione disulfide + H2O</text>
        <dbReference type="Rhea" id="RHEA:76707"/>
        <dbReference type="ChEBI" id="CHEBI:15377"/>
        <dbReference type="ChEBI" id="CHEBI:57925"/>
        <dbReference type="ChEBI" id="CHEBI:58297"/>
        <dbReference type="ChEBI" id="CHEBI:132087"/>
        <dbReference type="ChEBI" id="CHEBI:194369"/>
    </reaction>
    <physiologicalReaction direction="left-to-right" evidence="4">
        <dbReference type="Rhea" id="RHEA:76708"/>
    </physiologicalReaction>
</comment>
<comment type="catalytic activity">
    <reaction evidence="4">
        <text>(15S)-hydroperoxy-(11Z,13E)-eicosadienoate + 2 glutathione = (15S)-hydroxy-(11Z,13E)-eicosadienoate + glutathione disulfide + H2O</text>
        <dbReference type="Rhea" id="RHEA:76711"/>
        <dbReference type="ChEBI" id="CHEBI:15377"/>
        <dbReference type="ChEBI" id="CHEBI:57925"/>
        <dbReference type="ChEBI" id="CHEBI:58297"/>
        <dbReference type="ChEBI" id="CHEBI:144832"/>
        <dbReference type="ChEBI" id="CHEBI:195402"/>
    </reaction>
    <physiologicalReaction direction="left-to-right" evidence="4">
        <dbReference type="Rhea" id="RHEA:76712"/>
    </physiologicalReaction>
</comment>
<comment type="catalytic activity">
    <reaction evidence="4">
        <text>(17S)-hydroperoxy-(4Z,7Z,10Z,13Z,15E,19Z)-docosahexaenoate + 2 glutathione = (17S)-hydroxy-(4Z,7Z,10Z,13Z,15E,19Z)-docosahexaenoate + glutathione disulfide + H2O</text>
        <dbReference type="Rhea" id="RHEA:76715"/>
        <dbReference type="ChEBI" id="CHEBI:15377"/>
        <dbReference type="ChEBI" id="CHEBI:57925"/>
        <dbReference type="ChEBI" id="CHEBI:58297"/>
        <dbReference type="ChEBI" id="CHEBI:133795"/>
        <dbReference type="ChEBI" id="CHEBI:195403"/>
    </reaction>
    <physiologicalReaction direction="left-to-right" evidence="4">
        <dbReference type="Rhea" id="RHEA:76716"/>
    </physiologicalReaction>
</comment>
<comment type="subunit">
    <text evidence="5">Homotetramer. Interacts with MIEN1 (By similarity).</text>
</comment>
<comment type="subcellular location">
    <subcellularLocation>
        <location evidence="5">Cytoplasm</location>
    </subcellularLocation>
    <subcellularLocation>
        <location evidence="5">Mitochondrion</location>
    </subcellularLocation>
</comment>
<comment type="PTM">
    <text evidence="5">During periods of oxidative stress, Sec-47 may react with a superoxide radical, irreversibly lose hydroselenide and be converted to dehydroalanine.</text>
</comment>
<comment type="similarity">
    <text evidence="6">Belongs to the glutathione peroxidase family.</text>
</comment>
<keyword id="KW-0007">Acetylation</keyword>
<keyword id="KW-0963">Cytoplasm</keyword>
<keyword id="KW-0443">Lipid metabolism</keyword>
<keyword id="KW-0496">Mitochondrion</keyword>
<keyword id="KW-0560">Oxidoreductase</keyword>
<keyword id="KW-0575">Peroxidase</keyword>
<keyword id="KW-0597">Phosphoprotein</keyword>
<keyword id="KW-0712">Selenocysteine</keyword>
<gene>
    <name type="primary">GPX1</name>
</gene>
<sequence>MCAARLAAAAAQSVYAFSARPLAGGEPVSLGSLRGKVLLIENVASLUGTTVRDYTQMNELQRRLGPRGLVVLGFPCNQFGHQENAKNEEILNSLKYVRPGGGFEPNFMLFEKCEVNGAGAHPLFAFLREALPAPSDDATALMTDPKLIAWSPVCRNDVAWNFEKFLVGPDGVPVRRYSRRFQTIDIEPDIEALLSQGPSSA</sequence>
<reference key="1">
    <citation type="journal article" date="2003" name="Zool. Sci.">
        <title>Tissue distribution, molecular cloning, and gene expression of cytosolic glutathione peroxidase in Japanese monkey.</title>
        <authorList>
            <person name="Fukuhara R."/>
            <person name="Kageyama T."/>
        </authorList>
    </citation>
    <scope>NUCLEOTIDE SEQUENCE [MRNA]</scope>
</reference>